<accession>Q9GZL8</accession>
<accession>Q0VDG2</accession>
<comment type="interaction">
    <interactant intactId="EBI-25861458">
        <id>Q9GZL8</id>
    </interactant>
    <interactant intactId="EBI-747754">
        <id>P28799</id>
        <label>GRN</label>
    </interactant>
    <organismsDiffer>false</organismsDiffer>
    <experiments>3</experiments>
</comment>
<comment type="interaction">
    <interactant intactId="EBI-25861458">
        <id>Q9GZL8</id>
    </interactant>
    <interactant intactId="EBI-466029">
        <id>P42858</id>
        <label>HTT</label>
    </interactant>
    <organismsDiffer>false</organismsDiffer>
    <experiments>15</experiments>
</comment>
<comment type="interaction">
    <interactant intactId="EBI-25861458">
        <id>Q9GZL8</id>
    </interactant>
    <interactant intactId="EBI-720609">
        <id>O76024</id>
        <label>WFS1</label>
    </interactant>
    <organismsDiffer>false</organismsDiffer>
    <experiments>3</experiments>
</comment>
<comment type="tissue specificity">
    <text>Seems to be expressed only in testis.</text>
</comment>
<protein>
    <recommendedName>
        <fullName>Putative BPES syndrome breakpoint region protein</fullName>
    </recommendedName>
    <alternativeName>
        <fullName>BPES candidate 1</fullName>
    </alternativeName>
</protein>
<reference key="1">
    <citation type="journal article" date="2000" name="Genomics">
        <title>Identification of BPESC1, a novel gene disrupted by a balanced chromosomal translocation, t(3;4)(q23;p15.2), in a patient with BPES.</title>
        <authorList>
            <person name="De Baere E."/>
            <person name="Fukushima Y."/>
            <person name="Small K."/>
            <person name="Udar N."/>
            <person name="Van Camp G."/>
            <person name="Verhoeven K."/>
            <person name="Palotie A."/>
            <person name="De Paepe A."/>
            <person name="Messiaen L."/>
        </authorList>
    </citation>
    <scope>NUCLEOTIDE SEQUENCE [GENOMIC DNA / MRNA]</scope>
    <source>
        <tissue>Testis</tissue>
    </source>
</reference>
<reference key="2">
    <citation type="journal article" date="2006" name="Nature">
        <title>The DNA sequence, annotation and analysis of human chromosome 3.</title>
        <authorList>
            <person name="Muzny D.M."/>
            <person name="Scherer S.E."/>
            <person name="Kaul R."/>
            <person name="Wang J."/>
            <person name="Yu J."/>
            <person name="Sudbrak R."/>
            <person name="Buhay C.J."/>
            <person name="Chen R."/>
            <person name="Cree A."/>
            <person name="Ding Y."/>
            <person name="Dugan-Rocha S."/>
            <person name="Gill R."/>
            <person name="Gunaratne P."/>
            <person name="Harris R.A."/>
            <person name="Hawes A.C."/>
            <person name="Hernandez J."/>
            <person name="Hodgson A.V."/>
            <person name="Hume J."/>
            <person name="Jackson A."/>
            <person name="Khan Z.M."/>
            <person name="Kovar-Smith C."/>
            <person name="Lewis L.R."/>
            <person name="Lozado R.J."/>
            <person name="Metzker M.L."/>
            <person name="Milosavljevic A."/>
            <person name="Miner G.R."/>
            <person name="Morgan M.B."/>
            <person name="Nazareth L.V."/>
            <person name="Scott G."/>
            <person name="Sodergren E."/>
            <person name="Song X.-Z."/>
            <person name="Steffen D."/>
            <person name="Wei S."/>
            <person name="Wheeler D.A."/>
            <person name="Wright M.W."/>
            <person name="Worley K.C."/>
            <person name="Yuan Y."/>
            <person name="Zhang Z."/>
            <person name="Adams C.Q."/>
            <person name="Ansari-Lari M.A."/>
            <person name="Ayele M."/>
            <person name="Brown M.J."/>
            <person name="Chen G."/>
            <person name="Chen Z."/>
            <person name="Clendenning J."/>
            <person name="Clerc-Blankenburg K.P."/>
            <person name="Chen R."/>
            <person name="Chen Z."/>
            <person name="Davis C."/>
            <person name="Delgado O."/>
            <person name="Dinh H.H."/>
            <person name="Dong W."/>
            <person name="Draper H."/>
            <person name="Ernst S."/>
            <person name="Fu G."/>
            <person name="Gonzalez-Garay M.L."/>
            <person name="Garcia D.K."/>
            <person name="Gillett W."/>
            <person name="Gu J."/>
            <person name="Hao B."/>
            <person name="Haugen E."/>
            <person name="Havlak P."/>
            <person name="He X."/>
            <person name="Hennig S."/>
            <person name="Hu S."/>
            <person name="Huang W."/>
            <person name="Jackson L.R."/>
            <person name="Jacob L.S."/>
            <person name="Kelly S.H."/>
            <person name="Kube M."/>
            <person name="Levy R."/>
            <person name="Li Z."/>
            <person name="Liu B."/>
            <person name="Liu J."/>
            <person name="Liu W."/>
            <person name="Lu J."/>
            <person name="Maheshwari M."/>
            <person name="Nguyen B.-V."/>
            <person name="Okwuonu G.O."/>
            <person name="Palmeiri A."/>
            <person name="Pasternak S."/>
            <person name="Perez L.M."/>
            <person name="Phelps K.A."/>
            <person name="Plopper F.J."/>
            <person name="Qiang B."/>
            <person name="Raymond C."/>
            <person name="Rodriguez R."/>
            <person name="Saenphimmachak C."/>
            <person name="Santibanez J."/>
            <person name="Shen H."/>
            <person name="Shen Y."/>
            <person name="Subramanian S."/>
            <person name="Tabor P.E."/>
            <person name="Verduzco D."/>
            <person name="Waldron L."/>
            <person name="Wang J."/>
            <person name="Wang J."/>
            <person name="Wang Q."/>
            <person name="Williams G.A."/>
            <person name="Wong G.K.-S."/>
            <person name="Yao Z."/>
            <person name="Zhang J."/>
            <person name="Zhang X."/>
            <person name="Zhao G."/>
            <person name="Zhou J."/>
            <person name="Zhou Y."/>
            <person name="Nelson D."/>
            <person name="Lehrach H."/>
            <person name="Reinhardt R."/>
            <person name="Naylor S.L."/>
            <person name="Yang H."/>
            <person name="Olson M."/>
            <person name="Weinstock G."/>
            <person name="Gibbs R.A."/>
        </authorList>
    </citation>
    <scope>NUCLEOTIDE SEQUENCE [LARGE SCALE GENOMIC DNA]</scope>
</reference>
<reference key="3">
    <citation type="journal article" date="2004" name="Genome Res.">
        <title>The status, quality, and expansion of the NIH full-length cDNA project: the Mammalian Gene Collection (MGC).</title>
        <authorList>
            <consortium name="The MGC Project Team"/>
        </authorList>
    </citation>
    <scope>NUCLEOTIDE SEQUENCE [LARGE SCALE MRNA]</scope>
</reference>
<gene>
    <name type="primary">BPESC1</name>
</gene>
<sequence length="116" mass="12676">MGGRDQITNLGSEGETHPWGYSSPPYPLHTFFIPFLPSGFGGSGLGIPSDNEKHDLQDCVEVSRPEGPAPELPSSLCGWNKISSLCGLGFPSRDPKTWDLAMLLSPWVDFFELQLL</sequence>
<feature type="chain" id="PRO_0000064976" description="Putative BPES syndrome breakpoint region protein">
    <location>
        <begin position="1"/>
        <end position="116"/>
    </location>
</feature>
<dbReference type="EMBL" id="AF196864">
    <property type="protein sequence ID" value="AAG23726.1"/>
    <property type="molecule type" value="Genomic_DNA"/>
</dbReference>
<dbReference type="EMBL" id="AF196865">
    <property type="protein sequence ID" value="AAG23727.1"/>
    <property type="molecule type" value="mRNA"/>
</dbReference>
<dbReference type="EMBL" id="AC069525">
    <property type="status" value="NOT_ANNOTATED_CDS"/>
    <property type="molecule type" value="Genomic_DNA"/>
</dbReference>
<dbReference type="EMBL" id="BC119686">
    <property type="status" value="NOT_ANNOTATED_CDS"/>
    <property type="molecule type" value="mRNA"/>
</dbReference>
<dbReference type="EMBL" id="BC119687">
    <property type="status" value="NOT_ANNOTATED_CDS"/>
    <property type="molecule type" value="mRNA"/>
</dbReference>
<dbReference type="SMR" id="Q9GZL8"/>
<dbReference type="IntAct" id="Q9GZL8">
    <property type="interactions" value="3"/>
</dbReference>
<dbReference type="BioMuta" id="HGNC:13228"/>
<dbReference type="AGR" id="HGNC:13228"/>
<dbReference type="GeneCards" id="BPESC1"/>
<dbReference type="HGNC" id="HGNC:13228">
    <property type="gene designation" value="BPESC1"/>
</dbReference>
<dbReference type="MIM" id="618995">
    <property type="type" value="gene"/>
</dbReference>
<dbReference type="neXtProt" id="NX_Q9GZL8"/>
<dbReference type="InParanoid" id="Q9GZL8"/>
<dbReference type="PAN-GO" id="Q9GZL8">
    <property type="GO annotations" value="0 GO annotations based on evolutionary models"/>
</dbReference>
<dbReference type="Pharos" id="Q9GZL8">
    <property type="development level" value="Tdark"/>
</dbReference>
<dbReference type="PRO" id="PR:Q9GZL8"/>
<dbReference type="Proteomes" id="UP000005640">
    <property type="component" value="Unplaced"/>
</dbReference>
<dbReference type="RNAct" id="Q9GZL8">
    <property type="molecule type" value="protein"/>
</dbReference>
<keyword id="KW-1185">Reference proteome</keyword>
<proteinExistence type="evidence at protein level"/>
<name>BPEC1_HUMAN</name>
<organism>
    <name type="scientific">Homo sapiens</name>
    <name type="common">Human</name>
    <dbReference type="NCBI Taxonomy" id="9606"/>
    <lineage>
        <taxon>Eukaryota</taxon>
        <taxon>Metazoa</taxon>
        <taxon>Chordata</taxon>
        <taxon>Craniata</taxon>
        <taxon>Vertebrata</taxon>
        <taxon>Euteleostomi</taxon>
        <taxon>Mammalia</taxon>
        <taxon>Eutheria</taxon>
        <taxon>Euarchontoglires</taxon>
        <taxon>Primates</taxon>
        <taxon>Haplorrhini</taxon>
        <taxon>Catarrhini</taxon>
        <taxon>Hominidae</taxon>
        <taxon>Homo</taxon>
    </lineage>
</organism>